<protein>
    <recommendedName>
        <fullName>RNA replication protein</fullName>
    </recommendedName>
    <alternativeName>
        <fullName>165 kDa protein</fullName>
    </alternativeName>
    <alternativeName>
        <fullName>ORF1 protein</fullName>
    </alternativeName>
    <domain>
        <recommendedName>
            <fullName>RNA-directed RNA polymerase</fullName>
            <ecNumber>2.7.7.48</ecNumber>
        </recommendedName>
    </domain>
    <domain>
        <recommendedName>
            <fullName>Helicase</fullName>
            <ecNumber>3.6.4.13</ecNumber>
        </recommendedName>
    </domain>
</protein>
<keyword id="KW-0067">ATP-binding</keyword>
<keyword id="KW-0347">Helicase</keyword>
<keyword id="KW-0378">Hydrolase</keyword>
<keyword id="KW-0511">Multifunctional enzyme</keyword>
<keyword id="KW-0547">Nucleotide-binding</keyword>
<keyword id="KW-0548">Nucleotidyltransferase</keyword>
<keyword id="KW-0696">RNA-directed RNA polymerase</keyword>
<keyword id="KW-0808">Transferase</keyword>
<keyword id="KW-0693">Viral RNA replication</keyword>
<name>RDRP_PVX</name>
<sequence>MAKVREVYQSFTDSTTKTLIQDEAYRNIRPIMEKHKLANPYAQTVEAANDLEGFGIATNPYSIELHTHAAAKTIENKLLEVLGSILPQEPVTFMFLKPRKLNYMRRNPRIKDIFHNVAIEPRDVARYPKETIIDKLTEITTDTAYIGDTLHFLDPSYIVETFQNCPKLQTLYATLVLPVEAAFKMESTHPNIYSLKYFGDGFQYIPGNHGGGAYHHEFSHLQWLKVGKIKWRDPKDSFLGHLNYTTEQVEMHTVTVQLQESFAANHLYCIRRGDLLTPEVRTFGQPDRYVIPPQIFLPKVHNCKKPILKKTMMQLFLYVRTVKVAKNCDIFAKVRQLIKSSDLDKYSAVELVYLVSYMEFLADLQATTCFSDTLSGGLLTKTLAPVRAWIQEKKMQLFGLEDYAKLVKAVDFHPVDFSFKVETWDFRFHPLQAWKAFRPREVSDVEEMENLFSDGDLLDCFTRMPAYAVNAEEDLAAIRKTPEMDAGQEVKEPAGDRNQYSNPAETFLSKLHRKHSREVKHQAAKKAKRLAEIQESMRAEGEAESNEMSGGMGAIPSNAELPSTSGARQELTLPTTKPVPARWEDASFTDSSVEEEQVKLPGKEAVETATQQVIEGLPWKHWIPQLNAVGFKALEIQRDRSGTMIMPITEMVSGLEKEDFPEGTPKELARELLAMNRSPATIPLDLLRARDYGSDVKNKRIGAITKTQAASWGEYLTGKIESLTERKVAACVIHGAGGSGKSHAIQKALREIGKGSDITVVLPTNELRLDWSKKVPNTEPYMFKTYEKALIGGTGSIVIFDDYSKLPPGYIEALICFYSKIKLVILTGDSRQSVYHETAEDASIRHLGPATEYFSKYCRYYLNATHRNKKDLANMLGVYSERTGVTEISMSAEFLEGIPTLVPSDEKRRLYMGTGRNDTFTYAGCQGLTKPKVQIVLDHNTQVCSANVMYTALSRATDRIHFVNTSANSSAFWEKLDSTPYLKTFLSVVREQALKEYEPAEAEPIREPEPQTHMCVENEESVLEEYKEELLEKFDREIHSESHGHSNCVQTEDTTIQLFSHQQAKDETLLWATIDARLKTSNQETNFREFLSKKDIGDVLFLNYQKAMGLPKERIPFSQEVWEACAHEVQSKYLSKSKCNLINGTVRQSPDFDENKIMVFLKSQWVTKVEKLGLPKIKPGQTIAAFYQQTVMLFGTMARYMRWFRQAFQPKEVFINCETTPEDMSAWALNNWNFSRPSLANDYTAFDQSQDGAMLQFEVLKAKHHCIPEEIIQAYIDIKTNAHIFLGTLSIMRLTGEGPTFDANTECNIAYTHTKFDIPAGTAQVYAGDDSALDCVPEVKHSFHRLEDKLLLKSKPVITQQKKGSWPEFCGWLITPKGVMKDPIKLHVSLKLAEAKGELKKCQDSYEIDLSYAYDHKDSLHDLFDEKQCQAHTLTCRTLIKSGRGTVSLPRLRNFL</sequence>
<proteinExistence type="inferred from homology"/>
<reference key="1">
    <citation type="journal article" date="1988" name="Nucleic Acids Res.">
        <title>The nucleotide sequence of potato virus X RNA.</title>
        <authorList>
            <person name="Skryabin K.G."/>
            <person name="Kraev A.S."/>
            <person name="Morozov S.Y."/>
            <person name="Rozanov M.N."/>
            <person name="Chernov B.K."/>
            <person name="Lukasheva L.I."/>
            <person name="Atabekov J.G."/>
        </authorList>
    </citation>
    <scope>NUCLEOTIDE SEQUENCE [GENOMIC RNA]</scope>
</reference>
<organism>
    <name type="scientific">Potato virus X</name>
    <name type="common">PVX</name>
    <dbReference type="NCBI Taxonomy" id="12183"/>
    <lineage>
        <taxon>Viruses</taxon>
        <taxon>Riboviria</taxon>
        <taxon>Orthornavirae</taxon>
        <taxon>Kitrinoviricota</taxon>
        <taxon>Alsuviricetes</taxon>
        <taxon>Tymovirales</taxon>
        <taxon>Alphaflexiviridae</taxon>
        <taxon>Potexvirus</taxon>
    </lineage>
</organism>
<evidence type="ECO:0000255" key="1"/>
<evidence type="ECO:0000255" key="2">
    <source>
        <dbReference type="PROSITE-ProRule" id="PRU00539"/>
    </source>
</evidence>
<evidence type="ECO:0000255" key="3">
    <source>
        <dbReference type="PROSITE-ProRule" id="PRU01079"/>
    </source>
</evidence>
<evidence type="ECO:0000256" key="4">
    <source>
        <dbReference type="SAM" id="MobiDB-lite"/>
    </source>
</evidence>
<evidence type="ECO:0000305" key="5"/>
<dbReference type="EC" id="2.7.7.48"/>
<dbReference type="EC" id="3.6.4.13"/>
<dbReference type="EMBL" id="M72416">
    <property type="protein sequence ID" value="AAA47167.1"/>
    <property type="molecule type" value="Genomic_RNA"/>
</dbReference>
<dbReference type="Proteomes" id="UP000006841">
    <property type="component" value="Genome"/>
</dbReference>
<dbReference type="GO" id="GO:0005524">
    <property type="term" value="F:ATP binding"/>
    <property type="evidence" value="ECO:0007669"/>
    <property type="project" value="UniProtKB-KW"/>
</dbReference>
<dbReference type="GO" id="GO:0016887">
    <property type="term" value="F:ATP hydrolysis activity"/>
    <property type="evidence" value="ECO:0007669"/>
    <property type="project" value="RHEA"/>
</dbReference>
<dbReference type="GO" id="GO:0008174">
    <property type="term" value="F:mRNA methyltransferase activity"/>
    <property type="evidence" value="ECO:0007669"/>
    <property type="project" value="InterPro"/>
</dbReference>
<dbReference type="GO" id="GO:0003723">
    <property type="term" value="F:RNA binding"/>
    <property type="evidence" value="ECO:0007669"/>
    <property type="project" value="InterPro"/>
</dbReference>
<dbReference type="GO" id="GO:0003724">
    <property type="term" value="F:RNA helicase activity"/>
    <property type="evidence" value="ECO:0007669"/>
    <property type="project" value="UniProtKB-EC"/>
</dbReference>
<dbReference type="GO" id="GO:0003968">
    <property type="term" value="F:RNA-directed RNA polymerase activity"/>
    <property type="evidence" value="ECO:0007669"/>
    <property type="project" value="UniProtKB-KW"/>
</dbReference>
<dbReference type="GO" id="GO:0006351">
    <property type="term" value="P:DNA-templated transcription"/>
    <property type="evidence" value="ECO:0007669"/>
    <property type="project" value="InterPro"/>
</dbReference>
<dbReference type="GO" id="GO:0016556">
    <property type="term" value="P:mRNA modification"/>
    <property type="evidence" value="ECO:0007669"/>
    <property type="project" value="InterPro"/>
</dbReference>
<dbReference type="GO" id="GO:0006396">
    <property type="term" value="P:RNA processing"/>
    <property type="evidence" value="ECO:0007669"/>
    <property type="project" value="InterPro"/>
</dbReference>
<dbReference type="GO" id="GO:0039694">
    <property type="term" value="P:viral RNA genome replication"/>
    <property type="evidence" value="ECO:0007669"/>
    <property type="project" value="InterPro"/>
</dbReference>
<dbReference type="CDD" id="cd23246">
    <property type="entry name" value="Alphaflexiviridae_RdRp"/>
    <property type="match status" value="1"/>
</dbReference>
<dbReference type="FunFam" id="3.40.50.300:FF:001668">
    <property type="entry name" value="Non-structural polyprotein pORF1"/>
    <property type="match status" value="1"/>
</dbReference>
<dbReference type="Gene3D" id="3.40.50.300">
    <property type="entry name" value="P-loop containing nucleotide triphosphate hydrolases"/>
    <property type="match status" value="1"/>
</dbReference>
<dbReference type="InterPro" id="IPR027351">
    <property type="entry name" value="(+)RNA_virus_helicase_core_dom"/>
</dbReference>
<dbReference type="InterPro" id="IPR002588">
    <property type="entry name" value="Alphavirus-like_MT_dom"/>
</dbReference>
<dbReference type="InterPro" id="IPR043502">
    <property type="entry name" value="DNA/RNA_pol_sf"/>
</dbReference>
<dbReference type="InterPro" id="IPR027417">
    <property type="entry name" value="P-loop_NTPase"/>
</dbReference>
<dbReference type="InterPro" id="IPR001788">
    <property type="entry name" value="RNA-dep_RNA_pol_alsuvir"/>
</dbReference>
<dbReference type="InterPro" id="IPR007094">
    <property type="entry name" value="RNA-dir_pol_PSvirus"/>
</dbReference>
<dbReference type="Pfam" id="PF00978">
    <property type="entry name" value="RdRP_2"/>
    <property type="match status" value="1"/>
</dbReference>
<dbReference type="Pfam" id="PF01443">
    <property type="entry name" value="Viral_helicase1"/>
    <property type="match status" value="1"/>
</dbReference>
<dbReference type="Pfam" id="PF01660">
    <property type="entry name" value="Vmethyltransf"/>
    <property type="match status" value="1"/>
</dbReference>
<dbReference type="SUPFAM" id="SSF56672">
    <property type="entry name" value="DNA/RNA polymerases"/>
    <property type="match status" value="1"/>
</dbReference>
<dbReference type="SUPFAM" id="SSF52540">
    <property type="entry name" value="P-loop containing nucleoside triphosphate hydrolases"/>
    <property type="match status" value="2"/>
</dbReference>
<dbReference type="PROSITE" id="PS51743">
    <property type="entry name" value="ALPHAVIRUS_MT"/>
    <property type="match status" value="1"/>
</dbReference>
<dbReference type="PROSITE" id="PS51657">
    <property type="entry name" value="PSRV_HELICASE"/>
    <property type="match status" value="1"/>
</dbReference>
<dbReference type="PROSITE" id="PS50507">
    <property type="entry name" value="RDRP_SSRNA_POS"/>
    <property type="match status" value="1"/>
</dbReference>
<organismHost>
    <name type="scientific">Brassica campestris</name>
    <name type="common">Field mustard</name>
    <dbReference type="NCBI Taxonomy" id="3711"/>
</organismHost>
<organismHost>
    <name type="scientific">Solanum tuberosum</name>
    <name type="common">Potato</name>
    <dbReference type="NCBI Taxonomy" id="4113"/>
</organismHost>
<comment type="function">
    <text evidence="5">RNA replication. The central part of this protein possibly functions as an ATP-binding helicase (Probable).</text>
</comment>
<comment type="catalytic activity">
    <reaction evidence="2">
        <text>RNA(n) + a ribonucleoside 5'-triphosphate = RNA(n+1) + diphosphate</text>
        <dbReference type="Rhea" id="RHEA:21248"/>
        <dbReference type="Rhea" id="RHEA-COMP:14527"/>
        <dbReference type="Rhea" id="RHEA-COMP:17342"/>
        <dbReference type="ChEBI" id="CHEBI:33019"/>
        <dbReference type="ChEBI" id="CHEBI:61557"/>
        <dbReference type="ChEBI" id="CHEBI:140395"/>
        <dbReference type="EC" id="2.7.7.48"/>
    </reaction>
</comment>
<comment type="catalytic activity">
    <reaction>
        <text>ATP + H2O = ADP + phosphate + H(+)</text>
        <dbReference type="Rhea" id="RHEA:13065"/>
        <dbReference type="ChEBI" id="CHEBI:15377"/>
        <dbReference type="ChEBI" id="CHEBI:15378"/>
        <dbReference type="ChEBI" id="CHEBI:30616"/>
        <dbReference type="ChEBI" id="CHEBI:43474"/>
        <dbReference type="ChEBI" id="CHEBI:456216"/>
        <dbReference type="EC" id="3.6.4.13"/>
    </reaction>
</comment>
<comment type="similarity">
    <text evidence="5">Belongs to the potexvirus/carlavirus RNA replication protein family.</text>
</comment>
<feature type="chain" id="PRO_0000222553" description="RNA replication protein">
    <location>
        <begin position="1"/>
        <end position="1456"/>
    </location>
</feature>
<feature type="domain" description="Alphavirus-like MT" evidence="3">
    <location>
        <begin position="59"/>
        <end position="224"/>
    </location>
</feature>
<feature type="domain" description="(+)RNA virus helicase ATP-binding">
    <location>
        <begin position="695"/>
        <end position="862"/>
    </location>
</feature>
<feature type="domain" description="(+)RNA virus helicase C-terminal">
    <location>
        <begin position="863"/>
        <end position="997"/>
    </location>
</feature>
<feature type="domain" description="RdRp catalytic" evidence="2">
    <location>
        <begin position="1236"/>
        <end position="1343"/>
    </location>
</feature>
<feature type="region of interest" description="Disordered" evidence="4">
    <location>
        <begin position="537"/>
        <end position="573"/>
    </location>
</feature>
<feature type="compositionally biased region" description="Polar residues" evidence="4">
    <location>
        <begin position="560"/>
        <end position="573"/>
    </location>
</feature>
<feature type="binding site" evidence="1">
    <location>
        <begin position="735"/>
        <end position="742"/>
    </location>
    <ligand>
        <name>ATP</name>
        <dbReference type="ChEBI" id="CHEBI:30616"/>
    </ligand>
</feature>
<accession>P09395</accession>